<proteinExistence type="inferred from homology"/>
<name>RPOB_STRE4</name>
<organism>
    <name type="scientific">Streptococcus equi subsp. equi (strain 4047)</name>
    <dbReference type="NCBI Taxonomy" id="553482"/>
    <lineage>
        <taxon>Bacteria</taxon>
        <taxon>Bacillati</taxon>
        <taxon>Bacillota</taxon>
        <taxon>Bacilli</taxon>
        <taxon>Lactobacillales</taxon>
        <taxon>Streptococcaceae</taxon>
        <taxon>Streptococcus</taxon>
    </lineage>
</organism>
<dbReference type="EC" id="2.7.7.6" evidence="1"/>
<dbReference type="EMBL" id="FM204883">
    <property type="protein sequence ID" value="CAW92040.1"/>
    <property type="molecule type" value="Genomic_DNA"/>
</dbReference>
<dbReference type="RefSeq" id="WP_012514773.1">
    <property type="nucleotide sequence ID" value="NC_012471.1"/>
</dbReference>
<dbReference type="SMR" id="C0M7C8"/>
<dbReference type="KEGG" id="seu:SEQ_0098"/>
<dbReference type="HOGENOM" id="CLU_000524_4_1_9"/>
<dbReference type="OrthoDB" id="9803954at2"/>
<dbReference type="Proteomes" id="UP000001365">
    <property type="component" value="Chromosome"/>
</dbReference>
<dbReference type="GO" id="GO:0000428">
    <property type="term" value="C:DNA-directed RNA polymerase complex"/>
    <property type="evidence" value="ECO:0007669"/>
    <property type="project" value="UniProtKB-KW"/>
</dbReference>
<dbReference type="GO" id="GO:0003677">
    <property type="term" value="F:DNA binding"/>
    <property type="evidence" value="ECO:0007669"/>
    <property type="project" value="UniProtKB-UniRule"/>
</dbReference>
<dbReference type="GO" id="GO:0003899">
    <property type="term" value="F:DNA-directed RNA polymerase activity"/>
    <property type="evidence" value="ECO:0007669"/>
    <property type="project" value="UniProtKB-UniRule"/>
</dbReference>
<dbReference type="GO" id="GO:0032549">
    <property type="term" value="F:ribonucleoside binding"/>
    <property type="evidence" value="ECO:0007669"/>
    <property type="project" value="InterPro"/>
</dbReference>
<dbReference type="GO" id="GO:0006351">
    <property type="term" value="P:DNA-templated transcription"/>
    <property type="evidence" value="ECO:0007669"/>
    <property type="project" value="UniProtKB-UniRule"/>
</dbReference>
<dbReference type="CDD" id="cd00653">
    <property type="entry name" value="RNA_pol_B_RPB2"/>
    <property type="match status" value="1"/>
</dbReference>
<dbReference type="Gene3D" id="2.40.50.100">
    <property type="match status" value="1"/>
</dbReference>
<dbReference type="Gene3D" id="2.40.50.150">
    <property type="match status" value="1"/>
</dbReference>
<dbReference type="Gene3D" id="3.90.1100.10">
    <property type="match status" value="2"/>
</dbReference>
<dbReference type="Gene3D" id="2.30.150.10">
    <property type="entry name" value="DNA-directed RNA polymerase, beta subunit, external 1 domain"/>
    <property type="match status" value="1"/>
</dbReference>
<dbReference type="Gene3D" id="2.40.270.10">
    <property type="entry name" value="DNA-directed RNA polymerase, subunit 2, domain 6"/>
    <property type="match status" value="1"/>
</dbReference>
<dbReference type="Gene3D" id="3.90.1800.10">
    <property type="entry name" value="RNA polymerase alpha subunit dimerisation domain"/>
    <property type="match status" value="1"/>
</dbReference>
<dbReference type="Gene3D" id="3.90.1110.10">
    <property type="entry name" value="RNA polymerase Rpb2, domain 2"/>
    <property type="match status" value="1"/>
</dbReference>
<dbReference type="HAMAP" id="MF_01321">
    <property type="entry name" value="RNApol_bact_RpoB"/>
    <property type="match status" value="1"/>
</dbReference>
<dbReference type="InterPro" id="IPR042107">
    <property type="entry name" value="DNA-dir_RNA_pol_bsu_ext_1_sf"/>
</dbReference>
<dbReference type="InterPro" id="IPR019462">
    <property type="entry name" value="DNA-dir_RNA_pol_bsu_external_1"/>
</dbReference>
<dbReference type="InterPro" id="IPR015712">
    <property type="entry name" value="DNA-dir_RNA_pol_su2"/>
</dbReference>
<dbReference type="InterPro" id="IPR007120">
    <property type="entry name" value="DNA-dir_RNAP_su2_dom"/>
</dbReference>
<dbReference type="InterPro" id="IPR037033">
    <property type="entry name" value="DNA-dir_RNAP_su2_hyb_sf"/>
</dbReference>
<dbReference type="InterPro" id="IPR010243">
    <property type="entry name" value="RNA_pol_bsu_bac"/>
</dbReference>
<dbReference type="InterPro" id="IPR007121">
    <property type="entry name" value="RNA_pol_bsu_CS"/>
</dbReference>
<dbReference type="InterPro" id="IPR007644">
    <property type="entry name" value="RNA_pol_bsu_protrusion"/>
</dbReference>
<dbReference type="InterPro" id="IPR007642">
    <property type="entry name" value="RNA_pol_Rpb2_2"/>
</dbReference>
<dbReference type="InterPro" id="IPR037034">
    <property type="entry name" value="RNA_pol_Rpb2_2_sf"/>
</dbReference>
<dbReference type="InterPro" id="IPR007645">
    <property type="entry name" value="RNA_pol_Rpb2_3"/>
</dbReference>
<dbReference type="InterPro" id="IPR007641">
    <property type="entry name" value="RNA_pol_Rpb2_7"/>
</dbReference>
<dbReference type="InterPro" id="IPR014724">
    <property type="entry name" value="RNA_pol_RPB2_OB-fold"/>
</dbReference>
<dbReference type="NCBIfam" id="NF001616">
    <property type="entry name" value="PRK00405.1"/>
    <property type="match status" value="1"/>
</dbReference>
<dbReference type="NCBIfam" id="TIGR02013">
    <property type="entry name" value="rpoB"/>
    <property type="match status" value="1"/>
</dbReference>
<dbReference type="PANTHER" id="PTHR20856">
    <property type="entry name" value="DNA-DIRECTED RNA POLYMERASE I SUBUNIT 2"/>
    <property type="match status" value="1"/>
</dbReference>
<dbReference type="Pfam" id="PF04563">
    <property type="entry name" value="RNA_pol_Rpb2_1"/>
    <property type="match status" value="1"/>
</dbReference>
<dbReference type="Pfam" id="PF04561">
    <property type="entry name" value="RNA_pol_Rpb2_2"/>
    <property type="match status" value="2"/>
</dbReference>
<dbReference type="Pfam" id="PF04565">
    <property type="entry name" value="RNA_pol_Rpb2_3"/>
    <property type="match status" value="1"/>
</dbReference>
<dbReference type="Pfam" id="PF10385">
    <property type="entry name" value="RNA_pol_Rpb2_45"/>
    <property type="match status" value="1"/>
</dbReference>
<dbReference type="Pfam" id="PF00562">
    <property type="entry name" value="RNA_pol_Rpb2_6"/>
    <property type="match status" value="1"/>
</dbReference>
<dbReference type="Pfam" id="PF04560">
    <property type="entry name" value="RNA_pol_Rpb2_7"/>
    <property type="match status" value="1"/>
</dbReference>
<dbReference type="SUPFAM" id="SSF64484">
    <property type="entry name" value="beta and beta-prime subunits of DNA dependent RNA-polymerase"/>
    <property type="match status" value="1"/>
</dbReference>
<dbReference type="PROSITE" id="PS01166">
    <property type="entry name" value="RNA_POL_BETA"/>
    <property type="match status" value="1"/>
</dbReference>
<sequence>MAGHDVQYGKHRTRRSFSRIKEVLDLPNLIEIQTDSFQDFLDSGLKEVFEDVLPISNFTDTMELEFVGYEFKEPKYTLEEARIHDASYSAPIFVTFRLINKETGEIKTQEVFFGDFPIMTEMGTFIINGGERIIVSQLVRSPGVYFNDKVDKNGKVGYGSTVIPNRGAWLELETDSKDIAYTRIDRTRKIPFTTLVRALGFSGDDEIIDIFGDSELVRNTIEKDIHKNQSDSRTDEALKEIYERLRPGEPKTADSSRSLLTARFFDARRYDLAAVGRYKINKKLNIKTRLLNQIIAENLIDSETGEILVEAGTEMTRSVIESIEEQLDGDLNKFVYTPNDYAVVTEPVILQKFKVVSPVDPDRVVTIVGNANPDDKVRALTPADILAEMSYFLNLAEGLGKVDDIDHLGNRRIRAVGELLANQFRIGLARMERNVRERMSVQDNDVLTPQQIINIRPVTAAVKEFFGSSQLSQFMDQHNPLSELSHKRRLSALGPGGLTRDRAGYEVRDVHYTHYGRMCPIETPEGPNIGLINNLSSFGHLNKYGFIQTPYRKVDRVIGRVTNEIVWLTADEEDEFTVAQANSKLNPDGTFAEEIVMGRHQGNNQEFPASQVDFVDVSPKQVVAVATACIPFLENDDSNRALMGANMQRQAVPLIDPKAPYVGTGMEYQAAHDSGAAVIAQHNGKVVFSDAERVEVRREDGSLDVYHITKFRRSNSGTAYNQRTLVKIGDIVEKGDFIADGPSMEKGEMALGQNPIVAYMTWEGYNFEDAVIMSERLVKEDVYTSVHLEEFESETRDTKLGPEEITREVPNVGEEALKDLDEMGIIRIGAEVKEGDILVGKVTPKGEKDLSAEERLLHAIFGDKSREVRDTSLRVPHGGDGIVRDVKIFTRANGDELQSGVNMLVRVYIAQKRKIKVGDKMAGRHGNKGVVSRIVPVEDMPYLPDGTPVDIMLNPLGVPSRMNIGQVMELHLGMAARNLGIHIATPVFDGATSEDLWETVREAGMDSDAKTVLYDGRTGEPFDNRVSVGVMYMIKLHHMVDDKLHARSVGPYSLVTQQPLGGKAQFGGQRFGEMEVWALEAYGASNVLQEILTYKSDDVNGRLKAYEAITKGKPIPKPGVPESFRVLVKELQSLGLDMRVLDEDDNEVELRDLDEGEDDDVMHVDDLEKAREKQAQETQDIAESTEDN</sequence>
<keyword id="KW-0240">DNA-directed RNA polymerase</keyword>
<keyword id="KW-0548">Nucleotidyltransferase</keyword>
<keyword id="KW-0804">Transcription</keyword>
<keyword id="KW-0808">Transferase</keyword>
<evidence type="ECO:0000255" key="1">
    <source>
        <dbReference type="HAMAP-Rule" id="MF_01321"/>
    </source>
</evidence>
<comment type="function">
    <text evidence="1">DNA-dependent RNA polymerase catalyzes the transcription of DNA into RNA using the four ribonucleoside triphosphates as substrates.</text>
</comment>
<comment type="catalytic activity">
    <reaction evidence="1">
        <text>RNA(n) + a ribonucleoside 5'-triphosphate = RNA(n+1) + diphosphate</text>
        <dbReference type="Rhea" id="RHEA:21248"/>
        <dbReference type="Rhea" id="RHEA-COMP:14527"/>
        <dbReference type="Rhea" id="RHEA-COMP:17342"/>
        <dbReference type="ChEBI" id="CHEBI:33019"/>
        <dbReference type="ChEBI" id="CHEBI:61557"/>
        <dbReference type="ChEBI" id="CHEBI:140395"/>
        <dbReference type="EC" id="2.7.7.6"/>
    </reaction>
</comment>
<comment type="subunit">
    <text evidence="1">The RNAP catalytic core consists of 2 alpha, 1 beta, 1 beta' and 1 omega subunit. When a sigma factor is associated with the core the holoenzyme is formed, which can initiate transcription.</text>
</comment>
<comment type="similarity">
    <text evidence="1">Belongs to the RNA polymerase beta chain family.</text>
</comment>
<reference key="1">
    <citation type="journal article" date="2009" name="PLoS Pathog.">
        <title>Genomic evidence for the evolution of Streptococcus equi: host restriction, increased virulence, and genetic exchange with human pathogens.</title>
        <authorList>
            <person name="Holden M.T.G."/>
            <person name="Heather Z."/>
            <person name="Paillot R."/>
            <person name="Steward K.F."/>
            <person name="Webb K."/>
            <person name="Ainslie F."/>
            <person name="Jourdan T."/>
            <person name="Bason N.C."/>
            <person name="Holroyd N.E."/>
            <person name="Mungall K."/>
            <person name="Quail M.A."/>
            <person name="Sanders M."/>
            <person name="Simmonds M."/>
            <person name="Willey D."/>
            <person name="Brooks K."/>
            <person name="Aanensen D.M."/>
            <person name="Spratt B.G."/>
            <person name="Jolley K.A."/>
            <person name="Maiden M.C.J."/>
            <person name="Kehoe M."/>
            <person name="Chanter N."/>
            <person name="Bentley S.D."/>
            <person name="Robinson C."/>
            <person name="Maskell D.J."/>
            <person name="Parkhill J."/>
            <person name="Waller A.S."/>
        </authorList>
    </citation>
    <scope>NUCLEOTIDE SEQUENCE [LARGE SCALE GENOMIC DNA]</scope>
    <source>
        <strain>4047</strain>
    </source>
</reference>
<accession>C0M7C8</accession>
<protein>
    <recommendedName>
        <fullName evidence="1">DNA-directed RNA polymerase subunit beta</fullName>
        <shortName evidence="1">RNAP subunit beta</shortName>
        <ecNumber evidence="1">2.7.7.6</ecNumber>
    </recommendedName>
    <alternativeName>
        <fullName evidence="1">RNA polymerase subunit beta</fullName>
    </alternativeName>
    <alternativeName>
        <fullName evidence="1">Transcriptase subunit beta</fullName>
    </alternativeName>
</protein>
<feature type="chain" id="PRO_1000165822" description="DNA-directed RNA polymerase subunit beta">
    <location>
        <begin position="1"/>
        <end position="1188"/>
    </location>
</feature>
<gene>
    <name evidence="1" type="primary">rpoB</name>
    <name type="ordered locus">SEQ_0098</name>
</gene>